<gene>
    <name type="primary">neuC</name>
</gene>
<sequence length="391" mass="44211">MKKILYVTGSRAEYGIVRRLLTMLRETPEIQLDLAVTGMHCDNAYGNTIHIIEQDNFNIIKVVDININTTSHTHILHSMSVCLNSFGDFFSNNTYDAVMVLGDRYEIFSVAIAASMHNIPLIHIHGGEKTLANYDEFIRHSITKMSKLHLTSTEEYKKRVIQLGEKPGSVFNIGSLGAENALSLHLPNKQELELKYGSLLKRYFVVVFHPETLSTQSVNDQIDELLSAISFFKNTHDFIFIGSNADTGSDIIQRKVKYFCKEYKFRYLISIRSEDYLAMIKYSCGLIGNSSSGLIEVPSLKVATINIGDRQKGRVRGASVIDVPVEKNAIVRGINISQDEKFISVVQSSSNPYFKENALINAVRIIKDFIKSKNKDYKDFYDIPECTTSYD</sequence>
<comment type="function">
    <text>May be involved in the synthesis of polysialic acid (PSA).</text>
</comment>
<comment type="miscellaneous">
    <text>On the 2D-gel the determined pI of this protein is 7.38.</text>
</comment>
<evidence type="ECO:0000269" key="1">
    <source>
    </source>
</evidence>
<accession>Q47400</accession>
<name>NEUC_ECOLX</name>
<proteinExistence type="evidence at protein level"/>
<reference key="1">
    <citation type="journal article" date="1992" name="J. Bacteriol.">
        <title>Sequence and expression of the Escherichia coli K1 neuC gene product.</title>
        <authorList>
            <person name="Zapata G."/>
            <person name="Crowley J.M."/>
            <person name="Vann W.F."/>
        </authorList>
    </citation>
    <scope>NUCLEOTIDE SEQUENCE [GENOMIC DNA]</scope>
    <scope>PROTEIN SEQUENCE OF 2-13</scope>
    <source>
        <strain>K1</strain>
    </source>
</reference>
<feature type="initiator methionine" description="Removed" evidence="1">
    <location>
        <position position="1"/>
    </location>
</feature>
<feature type="chain" id="PRO_0000096786" description="Polysialic acid biosynthesis protein P7">
    <location>
        <begin position="2"/>
        <end position="391"/>
    </location>
</feature>
<protein>
    <recommendedName>
        <fullName>Polysialic acid biosynthesis protein P7</fullName>
    </recommendedName>
</protein>
<organism>
    <name type="scientific">Escherichia coli</name>
    <dbReference type="NCBI Taxonomy" id="562"/>
    <lineage>
        <taxon>Bacteria</taxon>
        <taxon>Pseudomonadati</taxon>
        <taxon>Pseudomonadota</taxon>
        <taxon>Gammaproteobacteria</taxon>
        <taxon>Enterobacterales</taxon>
        <taxon>Enterobacteriaceae</taxon>
        <taxon>Escherichia</taxon>
    </lineage>
</organism>
<keyword id="KW-0903">Direct protein sequencing</keyword>
<dbReference type="EMBL" id="M84026">
    <property type="protein sequence ID" value="AAA24211.1"/>
    <property type="molecule type" value="Genomic_DNA"/>
</dbReference>
<dbReference type="PIR" id="A43299">
    <property type="entry name" value="A43299"/>
</dbReference>
<dbReference type="RefSeq" id="WP_000723250.1">
    <property type="nucleotide sequence ID" value="NZ_WVVR01000003.1"/>
</dbReference>
<dbReference type="SMR" id="Q47400"/>
<dbReference type="OMA" id="VTYHPVT"/>
<dbReference type="BioCyc" id="MetaCyc:MONOMER-14541"/>
<dbReference type="GO" id="GO:0004553">
    <property type="term" value="F:hydrolase activity, hydrolyzing O-glycosyl compounds"/>
    <property type="evidence" value="ECO:0007669"/>
    <property type="project" value="InterPro"/>
</dbReference>
<dbReference type="GO" id="GO:0005975">
    <property type="term" value="P:carbohydrate metabolic process"/>
    <property type="evidence" value="ECO:0007669"/>
    <property type="project" value="UniProtKB-ARBA"/>
</dbReference>
<dbReference type="GO" id="GO:0006047">
    <property type="term" value="P:UDP-N-acetylglucosamine metabolic process"/>
    <property type="evidence" value="ECO:0007669"/>
    <property type="project" value="InterPro"/>
</dbReference>
<dbReference type="CDD" id="cd03786">
    <property type="entry name" value="GTB_UDP-GlcNAc_2-Epimerase"/>
    <property type="match status" value="1"/>
</dbReference>
<dbReference type="Gene3D" id="3.40.50.2000">
    <property type="entry name" value="Glycogen Phosphorylase B"/>
    <property type="match status" value="2"/>
</dbReference>
<dbReference type="InterPro" id="IPR020004">
    <property type="entry name" value="UDP-GlcNAc_Epase"/>
</dbReference>
<dbReference type="InterPro" id="IPR003331">
    <property type="entry name" value="UDP_GlcNAc_Epimerase_2_dom"/>
</dbReference>
<dbReference type="InterPro" id="IPR029767">
    <property type="entry name" value="WecB-like"/>
</dbReference>
<dbReference type="NCBIfam" id="TIGR03568">
    <property type="entry name" value="NeuC_NnaA"/>
    <property type="match status" value="1"/>
</dbReference>
<dbReference type="PANTHER" id="PTHR43174">
    <property type="entry name" value="UDP-N-ACETYLGLUCOSAMINE 2-EPIMERASE"/>
    <property type="match status" value="1"/>
</dbReference>
<dbReference type="PANTHER" id="PTHR43174:SF3">
    <property type="entry name" value="UDP-N-ACETYLGLUCOSAMINE 2-EPIMERASE"/>
    <property type="match status" value="1"/>
</dbReference>
<dbReference type="Pfam" id="PF02350">
    <property type="entry name" value="Epimerase_2"/>
    <property type="match status" value="1"/>
</dbReference>
<dbReference type="SUPFAM" id="SSF53756">
    <property type="entry name" value="UDP-Glycosyltransferase/glycogen phosphorylase"/>
    <property type="match status" value="1"/>
</dbReference>